<feature type="chain" id="PRO_0000146347" description="Small ribosomal subunit protein uS12">
    <location>
        <begin position="1"/>
        <end position="124"/>
    </location>
</feature>
<feature type="region of interest" description="Disordered" evidence="3">
    <location>
        <begin position="1"/>
        <end position="42"/>
    </location>
</feature>
<feature type="compositionally biased region" description="Basic residues" evidence="3">
    <location>
        <begin position="9"/>
        <end position="18"/>
    </location>
</feature>
<feature type="compositionally biased region" description="Polar residues" evidence="3">
    <location>
        <begin position="27"/>
        <end position="42"/>
    </location>
</feature>
<feature type="modified residue" description="3-methylthioaspartic acid" evidence="1">
    <location>
        <position position="89"/>
    </location>
</feature>
<proteinExistence type="inferred from homology"/>
<sequence>MPTIQQLVRKGRRPKVNKTKSPALRGNPQQRGVCSRVYTTTPKKPNSALRKVARVKLSNGTEVTVYIPGEGHNLQEHSIVLVRGGRVKDLPGVRYKVVRGALDAQAVKDRKQARSRYGAKMEKK</sequence>
<accession>Q83HC7</accession>
<keyword id="KW-0488">Methylation</keyword>
<keyword id="KW-0687">Ribonucleoprotein</keyword>
<keyword id="KW-0689">Ribosomal protein</keyword>
<keyword id="KW-0694">RNA-binding</keyword>
<keyword id="KW-0699">rRNA-binding</keyword>
<keyword id="KW-0820">tRNA-binding</keyword>
<comment type="function">
    <text evidence="2">With S4 and S5 plays an important role in translational accuracy.</text>
</comment>
<comment type="function">
    <text evidence="2">Interacts with and stabilizes bases of the 16S rRNA that are involved in tRNA selection in the A site and with the mRNA backbone. Located at the interface of the 30S and 50S subunits, it traverses the body of the 30S subunit contacting proteins on the other side and probably holding the rRNA structure together. The combined cluster of proteins S8, S12 and S17 appears to hold together the shoulder and platform of the 30S subunit.</text>
</comment>
<comment type="subunit">
    <text evidence="2">Part of the 30S ribosomal subunit. Contacts proteins S8 and S17. May interact with IF1 in the 30S initiation complex.</text>
</comment>
<comment type="similarity">
    <text evidence="2">Belongs to the universal ribosomal protein uS12 family.</text>
</comment>
<dbReference type="EMBL" id="BX251412">
    <property type="protein sequence ID" value="CAD67355.1"/>
    <property type="molecule type" value="Genomic_DNA"/>
</dbReference>
<dbReference type="RefSeq" id="WP_011096633.1">
    <property type="nucleotide sequence ID" value="NC_004551.1"/>
</dbReference>
<dbReference type="SMR" id="Q83HC7"/>
<dbReference type="GeneID" id="67388472"/>
<dbReference type="KEGG" id="tws:TW696"/>
<dbReference type="HOGENOM" id="CLU_104295_1_2_11"/>
<dbReference type="GO" id="GO:0015935">
    <property type="term" value="C:small ribosomal subunit"/>
    <property type="evidence" value="ECO:0007669"/>
    <property type="project" value="InterPro"/>
</dbReference>
<dbReference type="GO" id="GO:0019843">
    <property type="term" value="F:rRNA binding"/>
    <property type="evidence" value="ECO:0007669"/>
    <property type="project" value="UniProtKB-UniRule"/>
</dbReference>
<dbReference type="GO" id="GO:0003735">
    <property type="term" value="F:structural constituent of ribosome"/>
    <property type="evidence" value="ECO:0007669"/>
    <property type="project" value="InterPro"/>
</dbReference>
<dbReference type="GO" id="GO:0000049">
    <property type="term" value="F:tRNA binding"/>
    <property type="evidence" value="ECO:0007669"/>
    <property type="project" value="UniProtKB-UniRule"/>
</dbReference>
<dbReference type="GO" id="GO:0006412">
    <property type="term" value="P:translation"/>
    <property type="evidence" value="ECO:0007669"/>
    <property type="project" value="UniProtKB-UniRule"/>
</dbReference>
<dbReference type="CDD" id="cd03368">
    <property type="entry name" value="Ribosomal_S12"/>
    <property type="match status" value="1"/>
</dbReference>
<dbReference type="FunFam" id="2.40.50.140:FF:000001">
    <property type="entry name" value="30S ribosomal protein S12"/>
    <property type="match status" value="1"/>
</dbReference>
<dbReference type="Gene3D" id="2.40.50.140">
    <property type="entry name" value="Nucleic acid-binding proteins"/>
    <property type="match status" value="1"/>
</dbReference>
<dbReference type="HAMAP" id="MF_00403_B">
    <property type="entry name" value="Ribosomal_uS12_B"/>
    <property type="match status" value="1"/>
</dbReference>
<dbReference type="InterPro" id="IPR012340">
    <property type="entry name" value="NA-bd_OB-fold"/>
</dbReference>
<dbReference type="InterPro" id="IPR006032">
    <property type="entry name" value="Ribosomal_uS12"/>
</dbReference>
<dbReference type="InterPro" id="IPR005679">
    <property type="entry name" value="Ribosomal_uS12_bac"/>
</dbReference>
<dbReference type="NCBIfam" id="TIGR00981">
    <property type="entry name" value="rpsL_bact"/>
    <property type="match status" value="1"/>
</dbReference>
<dbReference type="PANTHER" id="PTHR11652">
    <property type="entry name" value="30S RIBOSOMAL PROTEIN S12 FAMILY MEMBER"/>
    <property type="match status" value="1"/>
</dbReference>
<dbReference type="Pfam" id="PF00164">
    <property type="entry name" value="Ribosom_S12_S23"/>
    <property type="match status" value="1"/>
</dbReference>
<dbReference type="PIRSF" id="PIRSF002133">
    <property type="entry name" value="Ribosomal_S12/S23"/>
    <property type="match status" value="1"/>
</dbReference>
<dbReference type="PRINTS" id="PR01034">
    <property type="entry name" value="RIBOSOMALS12"/>
</dbReference>
<dbReference type="SUPFAM" id="SSF50249">
    <property type="entry name" value="Nucleic acid-binding proteins"/>
    <property type="match status" value="1"/>
</dbReference>
<dbReference type="PROSITE" id="PS00055">
    <property type="entry name" value="RIBOSOMAL_S12"/>
    <property type="match status" value="1"/>
</dbReference>
<gene>
    <name evidence="2" type="primary">rpsL</name>
    <name type="ordered locus">TW696</name>
</gene>
<protein>
    <recommendedName>
        <fullName evidence="2">Small ribosomal subunit protein uS12</fullName>
    </recommendedName>
    <alternativeName>
        <fullName evidence="4">30S ribosomal protein S12</fullName>
    </alternativeName>
</protein>
<organism>
    <name type="scientific">Tropheryma whipplei (strain TW08/27)</name>
    <name type="common">Whipple's bacillus</name>
    <dbReference type="NCBI Taxonomy" id="218496"/>
    <lineage>
        <taxon>Bacteria</taxon>
        <taxon>Bacillati</taxon>
        <taxon>Actinomycetota</taxon>
        <taxon>Actinomycetes</taxon>
        <taxon>Micrococcales</taxon>
        <taxon>Tropherymataceae</taxon>
        <taxon>Tropheryma</taxon>
    </lineage>
</organism>
<reference key="1">
    <citation type="journal article" date="2003" name="Lancet">
        <title>Sequencing and analysis of the genome of the Whipple's disease bacterium Tropheryma whipplei.</title>
        <authorList>
            <person name="Bentley S.D."/>
            <person name="Maiwald M."/>
            <person name="Murphy L.D."/>
            <person name="Pallen M.J."/>
            <person name="Yeats C.A."/>
            <person name="Dover L.G."/>
            <person name="Norbertczak H.T."/>
            <person name="Besra G.S."/>
            <person name="Quail M.A."/>
            <person name="Harris D.E."/>
            <person name="von Herbay A."/>
            <person name="Goble A."/>
            <person name="Rutter S."/>
            <person name="Squares R."/>
            <person name="Squares S."/>
            <person name="Barrell B.G."/>
            <person name="Parkhill J."/>
            <person name="Relman D.A."/>
        </authorList>
    </citation>
    <scope>NUCLEOTIDE SEQUENCE [LARGE SCALE GENOMIC DNA]</scope>
    <source>
        <strain>TW08/27</strain>
    </source>
</reference>
<name>RS12_TROW8</name>
<evidence type="ECO:0000250" key="1"/>
<evidence type="ECO:0000255" key="2">
    <source>
        <dbReference type="HAMAP-Rule" id="MF_00403"/>
    </source>
</evidence>
<evidence type="ECO:0000256" key="3">
    <source>
        <dbReference type="SAM" id="MobiDB-lite"/>
    </source>
</evidence>
<evidence type="ECO:0000305" key="4"/>